<proteinExistence type="inferred from homology"/>
<name>DEOB_SHEPC</name>
<accession>A4Y9A6</accession>
<keyword id="KW-0963">Cytoplasm</keyword>
<keyword id="KW-0413">Isomerase</keyword>
<keyword id="KW-0464">Manganese</keyword>
<keyword id="KW-0479">Metal-binding</keyword>
<reference key="1">
    <citation type="submission" date="2007-04" db="EMBL/GenBank/DDBJ databases">
        <title>Complete sequence of Shewanella putrefaciens CN-32.</title>
        <authorList>
            <consortium name="US DOE Joint Genome Institute"/>
            <person name="Copeland A."/>
            <person name="Lucas S."/>
            <person name="Lapidus A."/>
            <person name="Barry K."/>
            <person name="Detter J.C."/>
            <person name="Glavina del Rio T."/>
            <person name="Hammon N."/>
            <person name="Israni S."/>
            <person name="Dalin E."/>
            <person name="Tice H."/>
            <person name="Pitluck S."/>
            <person name="Chain P."/>
            <person name="Malfatti S."/>
            <person name="Shin M."/>
            <person name="Vergez L."/>
            <person name="Schmutz J."/>
            <person name="Larimer F."/>
            <person name="Land M."/>
            <person name="Hauser L."/>
            <person name="Kyrpides N."/>
            <person name="Mikhailova N."/>
            <person name="Romine M.F."/>
            <person name="Fredrickson J."/>
            <person name="Tiedje J."/>
            <person name="Richardson P."/>
        </authorList>
    </citation>
    <scope>NUCLEOTIDE SEQUENCE [LARGE SCALE GENOMIC DNA]</scope>
    <source>
        <strain>CN-32 / ATCC BAA-453</strain>
    </source>
</reference>
<gene>
    <name evidence="1" type="primary">deoB</name>
    <name type="ordered locus">Sputcn32_2820</name>
</gene>
<feature type="chain" id="PRO_1000046399" description="Phosphopentomutase">
    <location>
        <begin position="1"/>
        <end position="404"/>
    </location>
</feature>
<feature type="binding site" evidence="1">
    <location>
        <position position="10"/>
    </location>
    <ligand>
        <name>Mn(2+)</name>
        <dbReference type="ChEBI" id="CHEBI:29035"/>
        <label>1</label>
    </ligand>
</feature>
<feature type="binding site" evidence="1">
    <location>
        <position position="303"/>
    </location>
    <ligand>
        <name>Mn(2+)</name>
        <dbReference type="ChEBI" id="CHEBI:29035"/>
        <label>2</label>
    </ligand>
</feature>
<feature type="binding site" evidence="1">
    <location>
        <position position="308"/>
    </location>
    <ligand>
        <name>Mn(2+)</name>
        <dbReference type="ChEBI" id="CHEBI:29035"/>
        <label>2</label>
    </ligand>
</feature>
<feature type="binding site" evidence="1">
    <location>
        <position position="344"/>
    </location>
    <ligand>
        <name>Mn(2+)</name>
        <dbReference type="ChEBI" id="CHEBI:29035"/>
        <label>1</label>
    </ligand>
</feature>
<feature type="binding site" evidence="1">
    <location>
        <position position="345"/>
    </location>
    <ligand>
        <name>Mn(2+)</name>
        <dbReference type="ChEBI" id="CHEBI:29035"/>
        <label>1</label>
    </ligand>
</feature>
<feature type="binding site" evidence="1">
    <location>
        <position position="356"/>
    </location>
    <ligand>
        <name>Mn(2+)</name>
        <dbReference type="ChEBI" id="CHEBI:29035"/>
        <label>2</label>
    </ligand>
</feature>
<sequence>MKRTIIMMLDSFGVGASADAASFGDVGSDTFGHIAKACAEGKADIGREGPLKLPNLARLGLGHAAMESTGAFAPGFGDNVELIGAYGHAQELSSGKDTPSGHWEMAGVPVLFEWGYFSEHQNSFPKELTDKILARAGLDGFLGNCHASGTTILEELGEEHMRSGKPIFYTSADSVFQIACHEETFGLDNLYRLCEITREELAPYNIGRVIARPFNGTGQSDFARTGNRKDYSLEPPAKTVLDKLKAAGGEVVSVGKIADIYAYCGITKKVKANGLEDLFDATLAEVKSAGDNTIVFTNFVDFDSHYGHRRDVAGYAKGLEYFDARLPEMLALLGEDDLLILTADHGCDPTWQGTDHTREYVPVLAYGAGLKAGSLGRRNSFADIGQSIASHFKLEPMAYGESFI</sequence>
<organism>
    <name type="scientific">Shewanella putrefaciens (strain CN-32 / ATCC BAA-453)</name>
    <dbReference type="NCBI Taxonomy" id="319224"/>
    <lineage>
        <taxon>Bacteria</taxon>
        <taxon>Pseudomonadati</taxon>
        <taxon>Pseudomonadota</taxon>
        <taxon>Gammaproteobacteria</taxon>
        <taxon>Alteromonadales</taxon>
        <taxon>Shewanellaceae</taxon>
        <taxon>Shewanella</taxon>
    </lineage>
</organism>
<evidence type="ECO:0000255" key="1">
    <source>
        <dbReference type="HAMAP-Rule" id="MF_00740"/>
    </source>
</evidence>
<dbReference type="EC" id="5.4.2.7" evidence="1"/>
<dbReference type="EMBL" id="CP000681">
    <property type="protein sequence ID" value="ABP76539.1"/>
    <property type="molecule type" value="Genomic_DNA"/>
</dbReference>
<dbReference type="SMR" id="A4Y9A6"/>
<dbReference type="STRING" id="319224.Sputcn32_2820"/>
<dbReference type="KEGG" id="spc:Sputcn32_2820"/>
<dbReference type="eggNOG" id="COG1015">
    <property type="taxonomic scope" value="Bacteria"/>
</dbReference>
<dbReference type="HOGENOM" id="CLU_053861_0_0_6"/>
<dbReference type="UniPathway" id="UPA00002">
    <property type="reaction ID" value="UER00467"/>
</dbReference>
<dbReference type="GO" id="GO:0005829">
    <property type="term" value="C:cytosol"/>
    <property type="evidence" value="ECO:0007669"/>
    <property type="project" value="TreeGrafter"/>
</dbReference>
<dbReference type="GO" id="GO:0000287">
    <property type="term" value="F:magnesium ion binding"/>
    <property type="evidence" value="ECO:0007669"/>
    <property type="project" value="InterPro"/>
</dbReference>
<dbReference type="GO" id="GO:0030145">
    <property type="term" value="F:manganese ion binding"/>
    <property type="evidence" value="ECO:0007669"/>
    <property type="project" value="UniProtKB-UniRule"/>
</dbReference>
<dbReference type="GO" id="GO:0008973">
    <property type="term" value="F:phosphopentomutase activity"/>
    <property type="evidence" value="ECO:0007669"/>
    <property type="project" value="UniProtKB-UniRule"/>
</dbReference>
<dbReference type="GO" id="GO:0006018">
    <property type="term" value="P:2-deoxyribose 1-phosphate catabolic process"/>
    <property type="evidence" value="ECO:0007669"/>
    <property type="project" value="UniProtKB-UniRule"/>
</dbReference>
<dbReference type="GO" id="GO:0006015">
    <property type="term" value="P:5-phosphoribose 1-diphosphate biosynthetic process"/>
    <property type="evidence" value="ECO:0007669"/>
    <property type="project" value="UniProtKB-UniPathway"/>
</dbReference>
<dbReference type="GO" id="GO:0043094">
    <property type="term" value="P:metabolic compound salvage"/>
    <property type="evidence" value="ECO:0007669"/>
    <property type="project" value="InterPro"/>
</dbReference>
<dbReference type="GO" id="GO:0009117">
    <property type="term" value="P:nucleotide metabolic process"/>
    <property type="evidence" value="ECO:0007669"/>
    <property type="project" value="InterPro"/>
</dbReference>
<dbReference type="CDD" id="cd16009">
    <property type="entry name" value="PPM"/>
    <property type="match status" value="1"/>
</dbReference>
<dbReference type="FunFam" id="3.30.70.1250:FF:000001">
    <property type="entry name" value="Phosphopentomutase"/>
    <property type="match status" value="1"/>
</dbReference>
<dbReference type="Gene3D" id="3.40.720.10">
    <property type="entry name" value="Alkaline Phosphatase, subunit A"/>
    <property type="match status" value="1"/>
</dbReference>
<dbReference type="Gene3D" id="3.30.70.1250">
    <property type="entry name" value="Phosphopentomutase"/>
    <property type="match status" value="1"/>
</dbReference>
<dbReference type="HAMAP" id="MF_00740">
    <property type="entry name" value="Phosphopentomut"/>
    <property type="match status" value="1"/>
</dbReference>
<dbReference type="InterPro" id="IPR017850">
    <property type="entry name" value="Alkaline_phosphatase_core_sf"/>
</dbReference>
<dbReference type="InterPro" id="IPR010045">
    <property type="entry name" value="DeoB"/>
</dbReference>
<dbReference type="InterPro" id="IPR006124">
    <property type="entry name" value="Metalloenzyme"/>
</dbReference>
<dbReference type="InterPro" id="IPR024052">
    <property type="entry name" value="Phosphopentomutase_DeoB_cap_sf"/>
</dbReference>
<dbReference type="NCBIfam" id="TIGR01696">
    <property type="entry name" value="deoB"/>
    <property type="match status" value="1"/>
</dbReference>
<dbReference type="NCBIfam" id="NF003766">
    <property type="entry name" value="PRK05362.1"/>
    <property type="match status" value="1"/>
</dbReference>
<dbReference type="PANTHER" id="PTHR21110">
    <property type="entry name" value="PHOSPHOPENTOMUTASE"/>
    <property type="match status" value="1"/>
</dbReference>
<dbReference type="PANTHER" id="PTHR21110:SF0">
    <property type="entry name" value="PHOSPHOPENTOMUTASE"/>
    <property type="match status" value="1"/>
</dbReference>
<dbReference type="Pfam" id="PF01676">
    <property type="entry name" value="Metalloenzyme"/>
    <property type="match status" value="1"/>
</dbReference>
<dbReference type="PIRSF" id="PIRSF001491">
    <property type="entry name" value="Ppentomutase"/>
    <property type="match status" value="1"/>
</dbReference>
<dbReference type="SUPFAM" id="SSF53649">
    <property type="entry name" value="Alkaline phosphatase-like"/>
    <property type="match status" value="1"/>
</dbReference>
<dbReference type="SUPFAM" id="SSF143856">
    <property type="entry name" value="DeoB insert domain-like"/>
    <property type="match status" value="1"/>
</dbReference>
<comment type="function">
    <text evidence="1">Isomerase that catalyzes the conversion of deoxy-ribose 1-phosphate (dRib-1-P) and ribose 1-phosphate (Rib-1-P) to deoxy-ribose 5-phosphate (dRib-5-P) and ribose 5-phosphate (Rib-5-P), respectively.</text>
</comment>
<comment type="catalytic activity">
    <reaction evidence="1">
        <text>2-deoxy-alpha-D-ribose 1-phosphate = 2-deoxy-D-ribose 5-phosphate</text>
        <dbReference type="Rhea" id="RHEA:27658"/>
        <dbReference type="ChEBI" id="CHEBI:57259"/>
        <dbReference type="ChEBI" id="CHEBI:62877"/>
        <dbReference type="EC" id="5.4.2.7"/>
    </reaction>
</comment>
<comment type="catalytic activity">
    <reaction evidence="1">
        <text>alpha-D-ribose 1-phosphate = D-ribose 5-phosphate</text>
        <dbReference type="Rhea" id="RHEA:18793"/>
        <dbReference type="ChEBI" id="CHEBI:57720"/>
        <dbReference type="ChEBI" id="CHEBI:78346"/>
        <dbReference type="EC" id="5.4.2.7"/>
    </reaction>
</comment>
<comment type="cofactor">
    <cofactor evidence="1">
        <name>Mn(2+)</name>
        <dbReference type="ChEBI" id="CHEBI:29035"/>
    </cofactor>
    <text evidence="1">Binds 2 manganese ions.</text>
</comment>
<comment type="pathway">
    <text evidence="1">Carbohydrate degradation; 2-deoxy-D-ribose 1-phosphate degradation; D-glyceraldehyde 3-phosphate and acetaldehyde from 2-deoxy-alpha-D-ribose 1-phosphate: step 1/2.</text>
</comment>
<comment type="subcellular location">
    <subcellularLocation>
        <location evidence="1">Cytoplasm</location>
    </subcellularLocation>
</comment>
<comment type="similarity">
    <text evidence="1">Belongs to the phosphopentomutase family.</text>
</comment>
<protein>
    <recommendedName>
        <fullName evidence="1">Phosphopentomutase</fullName>
        <ecNumber evidence="1">5.4.2.7</ecNumber>
    </recommendedName>
    <alternativeName>
        <fullName evidence="1">Phosphodeoxyribomutase</fullName>
    </alternativeName>
</protein>